<keyword id="KW-0479">Metal-binding</keyword>
<keyword id="KW-0687">Ribonucleoprotein</keyword>
<keyword id="KW-0689">Ribosomal protein</keyword>
<keyword id="KW-0694">RNA-binding</keyword>
<keyword id="KW-0699">rRNA-binding</keyword>
<keyword id="KW-0862">Zinc</keyword>
<reference key="1">
    <citation type="journal article" date="2006" name="J. Bacteriol.">
        <title>Whole-genome sequence of Listeria welshimeri reveals common steps in genome reduction with Listeria innocua as compared to Listeria monocytogenes.</title>
        <authorList>
            <person name="Hain T."/>
            <person name="Steinweg C."/>
            <person name="Kuenne C.T."/>
            <person name="Billion A."/>
            <person name="Ghai R."/>
            <person name="Chatterjee S.S."/>
            <person name="Domann E."/>
            <person name="Kaerst U."/>
            <person name="Goesmann A."/>
            <person name="Bekel T."/>
            <person name="Bartels D."/>
            <person name="Kaiser O."/>
            <person name="Meyer F."/>
            <person name="Puehler A."/>
            <person name="Weisshaar B."/>
            <person name="Wehland J."/>
            <person name="Liang C."/>
            <person name="Dandekar T."/>
            <person name="Lampidis R."/>
            <person name="Kreft J."/>
            <person name="Goebel W."/>
            <person name="Chakraborty T."/>
        </authorList>
    </citation>
    <scope>NUCLEOTIDE SEQUENCE [LARGE SCALE GENOMIC DNA]</scope>
    <source>
        <strain>ATCC 35897 / DSM 20650 / CCUG 15529 / CIP 8149 / NCTC 11857 / SLCC 5334 / V8</strain>
    </source>
</reference>
<accession>A0ALV5</accession>
<gene>
    <name evidence="1" type="primary">rpsZ</name>
    <name evidence="1" type="synonym">rpsN</name>
    <name type="ordered locus">lwe2569</name>
</gene>
<organism>
    <name type="scientific">Listeria welshimeri serovar 6b (strain ATCC 35897 / DSM 20650 / CCUG 15529 / CIP 8149 / NCTC 11857 / SLCC 5334 / V8)</name>
    <dbReference type="NCBI Taxonomy" id="386043"/>
    <lineage>
        <taxon>Bacteria</taxon>
        <taxon>Bacillati</taxon>
        <taxon>Bacillota</taxon>
        <taxon>Bacilli</taxon>
        <taxon>Bacillales</taxon>
        <taxon>Listeriaceae</taxon>
        <taxon>Listeria</taxon>
    </lineage>
</organism>
<protein>
    <recommendedName>
        <fullName evidence="1">Small ribosomal subunit protein uS14B</fullName>
    </recommendedName>
    <alternativeName>
        <fullName evidence="2">30S ribosomal protein S14 type Z</fullName>
    </alternativeName>
</protein>
<name>RS14Z_LISW6</name>
<evidence type="ECO:0000255" key="1">
    <source>
        <dbReference type="HAMAP-Rule" id="MF_01364"/>
    </source>
</evidence>
<evidence type="ECO:0000305" key="2"/>
<feature type="chain" id="PRO_1000067949" description="Small ribosomal subunit protein uS14B">
    <location>
        <begin position="1"/>
        <end position="61"/>
    </location>
</feature>
<feature type="binding site" evidence="1">
    <location>
        <position position="24"/>
    </location>
    <ligand>
        <name>Zn(2+)</name>
        <dbReference type="ChEBI" id="CHEBI:29105"/>
    </ligand>
</feature>
<feature type="binding site" evidence="1">
    <location>
        <position position="27"/>
    </location>
    <ligand>
        <name>Zn(2+)</name>
        <dbReference type="ChEBI" id="CHEBI:29105"/>
    </ligand>
</feature>
<feature type="binding site" evidence="1">
    <location>
        <position position="40"/>
    </location>
    <ligand>
        <name>Zn(2+)</name>
        <dbReference type="ChEBI" id="CHEBI:29105"/>
    </ligand>
</feature>
<feature type="binding site" evidence="1">
    <location>
        <position position="43"/>
    </location>
    <ligand>
        <name>Zn(2+)</name>
        <dbReference type="ChEBI" id="CHEBI:29105"/>
    </ligand>
</feature>
<comment type="function">
    <text evidence="1">Binds 16S rRNA, required for the assembly of 30S particles and may also be responsible for determining the conformation of the 16S rRNA at the A site.</text>
</comment>
<comment type="cofactor">
    <cofactor evidence="1">
        <name>Zn(2+)</name>
        <dbReference type="ChEBI" id="CHEBI:29105"/>
    </cofactor>
    <text evidence="1">Binds 1 zinc ion per subunit.</text>
</comment>
<comment type="subunit">
    <text evidence="1">Part of the 30S ribosomal subunit. Contacts proteins S3 and S10.</text>
</comment>
<comment type="similarity">
    <text evidence="1">Belongs to the universal ribosomal protein uS14 family. Zinc-binding uS14 subfamily.</text>
</comment>
<sequence length="61" mass="7147">MAKKSMIAKQKRTPKYAVQAYTRCERCGRPHSVIRKFKLCRICFRELAYKGQIPGVKKASW</sequence>
<proteinExistence type="inferred from homology"/>
<dbReference type="EMBL" id="AM263198">
    <property type="protein sequence ID" value="CAK21987.1"/>
    <property type="molecule type" value="Genomic_DNA"/>
</dbReference>
<dbReference type="RefSeq" id="WP_003723684.1">
    <property type="nucleotide sequence ID" value="NC_008555.1"/>
</dbReference>
<dbReference type="SMR" id="A0ALV5"/>
<dbReference type="STRING" id="386043.lwe2569"/>
<dbReference type="KEGG" id="lwe:lwe2569"/>
<dbReference type="eggNOG" id="COG0199">
    <property type="taxonomic scope" value="Bacteria"/>
</dbReference>
<dbReference type="HOGENOM" id="CLU_139869_3_0_9"/>
<dbReference type="OrthoDB" id="9810484at2"/>
<dbReference type="Proteomes" id="UP000000779">
    <property type="component" value="Chromosome"/>
</dbReference>
<dbReference type="GO" id="GO:0015935">
    <property type="term" value="C:small ribosomal subunit"/>
    <property type="evidence" value="ECO:0007669"/>
    <property type="project" value="TreeGrafter"/>
</dbReference>
<dbReference type="GO" id="GO:0019843">
    <property type="term" value="F:rRNA binding"/>
    <property type="evidence" value="ECO:0007669"/>
    <property type="project" value="UniProtKB-UniRule"/>
</dbReference>
<dbReference type="GO" id="GO:0003735">
    <property type="term" value="F:structural constituent of ribosome"/>
    <property type="evidence" value="ECO:0007669"/>
    <property type="project" value="InterPro"/>
</dbReference>
<dbReference type="GO" id="GO:0008270">
    <property type="term" value="F:zinc ion binding"/>
    <property type="evidence" value="ECO:0007669"/>
    <property type="project" value="UniProtKB-UniRule"/>
</dbReference>
<dbReference type="GO" id="GO:0006412">
    <property type="term" value="P:translation"/>
    <property type="evidence" value="ECO:0007669"/>
    <property type="project" value="UniProtKB-UniRule"/>
</dbReference>
<dbReference type="FunFam" id="4.10.830.10:FF:000001">
    <property type="entry name" value="30S ribosomal protein S14 type Z"/>
    <property type="match status" value="1"/>
</dbReference>
<dbReference type="Gene3D" id="4.10.830.10">
    <property type="entry name" value="30s Ribosomal Protein S14, Chain N"/>
    <property type="match status" value="1"/>
</dbReference>
<dbReference type="HAMAP" id="MF_01364_B">
    <property type="entry name" value="Ribosomal_uS14_2_B"/>
    <property type="match status" value="1"/>
</dbReference>
<dbReference type="InterPro" id="IPR001209">
    <property type="entry name" value="Ribosomal_uS14"/>
</dbReference>
<dbReference type="InterPro" id="IPR023053">
    <property type="entry name" value="Ribosomal_uS14_bact"/>
</dbReference>
<dbReference type="InterPro" id="IPR018271">
    <property type="entry name" value="Ribosomal_uS14_CS"/>
</dbReference>
<dbReference type="InterPro" id="IPR043140">
    <property type="entry name" value="Ribosomal_uS14_sf"/>
</dbReference>
<dbReference type="NCBIfam" id="NF005974">
    <property type="entry name" value="PRK08061.1"/>
    <property type="match status" value="1"/>
</dbReference>
<dbReference type="PANTHER" id="PTHR19836">
    <property type="entry name" value="30S RIBOSOMAL PROTEIN S14"/>
    <property type="match status" value="1"/>
</dbReference>
<dbReference type="PANTHER" id="PTHR19836:SF26">
    <property type="entry name" value="SMALL RIBOSOMAL SUBUNIT PROTEIN US14B"/>
    <property type="match status" value="1"/>
</dbReference>
<dbReference type="Pfam" id="PF00253">
    <property type="entry name" value="Ribosomal_S14"/>
    <property type="match status" value="1"/>
</dbReference>
<dbReference type="SUPFAM" id="SSF57716">
    <property type="entry name" value="Glucocorticoid receptor-like (DNA-binding domain)"/>
    <property type="match status" value="1"/>
</dbReference>
<dbReference type="PROSITE" id="PS00527">
    <property type="entry name" value="RIBOSOMAL_S14"/>
    <property type="match status" value="1"/>
</dbReference>